<accession>Q3ZZB2</accession>
<evidence type="ECO:0000255" key="1">
    <source>
        <dbReference type="HAMAP-Rule" id="MF_00098"/>
    </source>
</evidence>
<keyword id="KW-0030">Aminoacyl-tRNA synthetase</keyword>
<keyword id="KW-0067">ATP-binding</keyword>
<keyword id="KW-0963">Cytoplasm</keyword>
<keyword id="KW-0436">Ligase</keyword>
<keyword id="KW-0479">Metal-binding</keyword>
<keyword id="KW-0547">Nucleotide-binding</keyword>
<keyword id="KW-0648">Protein biosynthesis</keyword>
<keyword id="KW-0862">Zinc</keyword>
<gene>
    <name evidence="1" type="primary">metG</name>
    <name type="ordered locus">cbdbA334</name>
</gene>
<proteinExistence type="inferred from homology"/>
<dbReference type="EC" id="6.1.1.10" evidence="1"/>
<dbReference type="EMBL" id="AJ965256">
    <property type="protein sequence ID" value="CAI82554.1"/>
    <property type="molecule type" value="Genomic_DNA"/>
</dbReference>
<dbReference type="RefSeq" id="WP_011308911.1">
    <property type="nucleotide sequence ID" value="NC_007356.1"/>
</dbReference>
<dbReference type="SMR" id="Q3ZZB2"/>
<dbReference type="KEGG" id="deh:cbdbA334"/>
<dbReference type="HOGENOM" id="CLU_009710_1_2_0"/>
<dbReference type="Proteomes" id="UP000000433">
    <property type="component" value="Chromosome"/>
</dbReference>
<dbReference type="GO" id="GO:0005829">
    <property type="term" value="C:cytosol"/>
    <property type="evidence" value="ECO:0007669"/>
    <property type="project" value="TreeGrafter"/>
</dbReference>
<dbReference type="GO" id="GO:0005524">
    <property type="term" value="F:ATP binding"/>
    <property type="evidence" value="ECO:0007669"/>
    <property type="project" value="UniProtKB-UniRule"/>
</dbReference>
<dbReference type="GO" id="GO:0046872">
    <property type="term" value="F:metal ion binding"/>
    <property type="evidence" value="ECO:0007669"/>
    <property type="project" value="UniProtKB-KW"/>
</dbReference>
<dbReference type="GO" id="GO:0004825">
    <property type="term" value="F:methionine-tRNA ligase activity"/>
    <property type="evidence" value="ECO:0007669"/>
    <property type="project" value="UniProtKB-UniRule"/>
</dbReference>
<dbReference type="GO" id="GO:0006431">
    <property type="term" value="P:methionyl-tRNA aminoacylation"/>
    <property type="evidence" value="ECO:0007669"/>
    <property type="project" value="UniProtKB-UniRule"/>
</dbReference>
<dbReference type="CDD" id="cd07957">
    <property type="entry name" value="Anticodon_Ia_Met"/>
    <property type="match status" value="1"/>
</dbReference>
<dbReference type="CDD" id="cd00814">
    <property type="entry name" value="MetRS_core"/>
    <property type="match status" value="1"/>
</dbReference>
<dbReference type="FunFam" id="2.20.28.20:FF:000001">
    <property type="entry name" value="Methionine--tRNA ligase"/>
    <property type="match status" value="1"/>
</dbReference>
<dbReference type="Gene3D" id="3.40.50.620">
    <property type="entry name" value="HUPs"/>
    <property type="match status" value="1"/>
</dbReference>
<dbReference type="Gene3D" id="1.10.730.10">
    <property type="entry name" value="Isoleucyl-tRNA Synthetase, Domain 1"/>
    <property type="match status" value="1"/>
</dbReference>
<dbReference type="Gene3D" id="2.20.28.20">
    <property type="entry name" value="Methionyl-tRNA synthetase, Zn-domain"/>
    <property type="match status" value="1"/>
</dbReference>
<dbReference type="HAMAP" id="MF_00098">
    <property type="entry name" value="Met_tRNA_synth_type1"/>
    <property type="match status" value="1"/>
</dbReference>
<dbReference type="InterPro" id="IPR041872">
    <property type="entry name" value="Anticodon_Met"/>
</dbReference>
<dbReference type="InterPro" id="IPR023458">
    <property type="entry name" value="Met-tRNA_ligase_1"/>
</dbReference>
<dbReference type="InterPro" id="IPR014758">
    <property type="entry name" value="Met-tRNA_synth"/>
</dbReference>
<dbReference type="InterPro" id="IPR015413">
    <property type="entry name" value="Methionyl/Leucyl_tRNA_Synth"/>
</dbReference>
<dbReference type="InterPro" id="IPR033911">
    <property type="entry name" value="MetRS_core"/>
</dbReference>
<dbReference type="InterPro" id="IPR029038">
    <property type="entry name" value="MetRS_Zn"/>
</dbReference>
<dbReference type="InterPro" id="IPR014729">
    <property type="entry name" value="Rossmann-like_a/b/a_fold"/>
</dbReference>
<dbReference type="InterPro" id="IPR009080">
    <property type="entry name" value="tRNAsynth_Ia_anticodon-bd"/>
</dbReference>
<dbReference type="NCBIfam" id="TIGR00398">
    <property type="entry name" value="metG"/>
    <property type="match status" value="1"/>
</dbReference>
<dbReference type="NCBIfam" id="NF001100">
    <property type="entry name" value="PRK00133.1"/>
    <property type="match status" value="1"/>
</dbReference>
<dbReference type="PANTHER" id="PTHR45765">
    <property type="entry name" value="METHIONINE--TRNA LIGASE"/>
    <property type="match status" value="1"/>
</dbReference>
<dbReference type="PANTHER" id="PTHR45765:SF1">
    <property type="entry name" value="METHIONINE--TRNA LIGASE, CYTOPLASMIC"/>
    <property type="match status" value="1"/>
</dbReference>
<dbReference type="Pfam" id="PF19303">
    <property type="entry name" value="Anticodon_3"/>
    <property type="match status" value="1"/>
</dbReference>
<dbReference type="Pfam" id="PF09334">
    <property type="entry name" value="tRNA-synt_1g"/>
    <property type="match status" value="1"/>
</dbReference>
<dbReference type="PRINTS" id="PR01041">
    <property type="entry name" value="TRNASYNTHMET"/>
</dbReference>
<dbReference type="SUPFAM" id="SSF47323">
    <property type="entry name" value="Anticodon-binding domain of a subclass of class I aminoacyl-tRNA synthetases"/>
    <property type="match status" value="1"/>
</dbReference>
<dbReference type="SUPFAM" id="SSF57770">
    <property type="entry name" value="Methionyl-tRNA synthetase (MetRS), Zn-domain"/>
    <property type="match status" value="1"/>
</dbReference>
<dbReference type="SUPFAM" id="SSF52374">
    <property type="entry name" value="Nucleotidylyl transferase"/>
    <property type="match status" value="1"/>
</dbReference>
<feature type="chain" id="PRO_0000331813" description="Methionine--tRNA ligase">
    <location>
        <begin position="1"/>
        <end position="553"/>
    </location>
</feature>
<feature type="short sequence motif" description="'HIGH' region">
    <location>
        <begin position="12"/>
        <end position="22"/>
    </location>
</feature>
<feature type="short sequence motif" description="'KMSKS' region">
    <location>
        <begin position="332"/>
        <end position="336"/>
    </location>
</feature>
<feature type="binding site" evidence="1">
    <location>
        <position position="144"/>
    </location>
    <ligand>
        <name>Zn(2+)</name>
        <dbReference type="ChEBI" id="CHEBI:29105"/>
    </ligand>
</feature>
<feature type="binding site" evidence="1">
    <location>
        <position position="147"/>
    </location>
    <ligand>
        <name>Zn(2+)</name>
        <dbReference type="ChEBI" id="CHEBI:29105"/>
    </ligand>
</feature>
<feature type="binding site" evidence="1">
    <location>
        <position position="157"/>
    </location>
    <ligand>
        <name>Zn(2+)</name>
        <dbReference type="ChEBI" id="CHEBI:29105"/>
    </ligand>
</feature>
<feature type="binding site" evidence="1">
    <location>
        <position position="160"/>
    </location>
    <ligand>
        <name>Zn(2+)</name>
        <dbReference type="ChEBI" id="CHEBI:29105"/>
    </ligand>
</feature>
<feature type="binding site" evidence="1">
    <location>
        <position position="335"/>
    </location>
    <ligand>
        <name>ATP</name>
        <dbReference type="ChEBI" id="CHEBI:30616"/>
    </ligand>
</feature>
<protein>
    <recommendedName>
        <fullName evidence="1">Methionine--tRNA ligase</fullName>
        <ecNumber evidence="1">6.1.1.10</ecNumber>
    </recommendedName>
    <alternativeName>
        <fullName evidence="1">Methionyl-tRNA synthetase</fullName>
        <shortName evidence="1">MetRS</shortName>
    </alternativeName>
</protein>
<organism>
    <name type="scientific">Dehalococcoides mccartyi (strain CBDB1)</name>
    <dbReference type="NCBI Taxonomy" id="255470"/>
    <lineage>
        <taxon>Bacteria</taxon>
        <taxon>Bacillati</taxon>
        <taxon>Chloroflexota</taxon>
        <taxon>Dehalococcoidia</taxon>
        <taxon>Dehalococcoidales</taxon>
        <taxon>Dehalococcoidaceae</taxon>
        <taxon>Dehalococcoides</taxon>
    </lineage>
</organism>
<comment type="function">
    <text evidence="1">Is required not only for elongation of protein synthesis but also for the initiation of all mRNA translation through initiator tRNA(fMet) aminoacylation.</text>
</comment>
<comment type="catalytic activity">
    <reaction evidence="1">
        <text>tRNA(Met) + L-methionine + ATP = L-methionyl-tRNA(Met) + AMP + diphosphate</text>
        <dbReference type="Rhea" id="RHEA:13481"/>
        <dbReference type="Rhea" id="RHEA-COMP:9667"/>
        <dbReference type="Rhea" id="RHEA-COMP:9698"/>
        <dbReference type="ChEBI" id="CHEBI:30616"/>
        <dbReference type="ChEBI" id="CHEBI:33019"/>
        <dbReference type="ChEBI" id="CHEBI:57844"/>
        <dbReference type="ChEBI" id="CHEBI:78442"/>
        <dbReference type="ChEBI" id="CHEBI:78530"/>
        <dbReference type="ChEBI" id="CHEBI:456215"/>
        <dbReference type="EC" id="6.1.1.10"/>
    </reaction>
</comment>
<comment type="cofactor">
    <cofactor evidence="1">
        <name>Zn(2+)</name>
        <dbReference type="ChEBI" id="CHEBI:29105"/>
    </cofactor>
    <text evidence="1">Binds 1 zinc ion per subunit.</text>
</comment>
<comment type="subunit">
    <text evidence="1">Monomer.</text>
</comment>
<comment type="subcellular location">
    <subcellularLocation>
        <location evidence="1">Cytoplasm</location>
    </subcellularLocation>
</comment>
<comment type="similarity">
    <text evidence="1">Belongs to the class-I aminoacyl-tRNA synthetase family. MetG type 1 subfamily.</text>
</comment>
<sequence length="553" mass="63319">MSERIFIGVAWPYANSQLHLGHVAGAYLPADIFARYHRTRGDEVLMVSGSDMHGTPITIRAEQEGITAAEVAERYHQRFMASWPKLGISWDFYTSTATANHARTAQEMFLSLYEKGYIYKNTVCQPFCSHCNRFLPDRYVEGTCPHCKYEGARGDQCDNCGKPLNAAELLNFRCKNCGNPPEFRETEHFFLKLSAFEEELIRWVETKTHWRTNVLNFTLRYLKEGLKDRAITRDLDWGVPLPLPGYEGKRLYVWFEAVIGYLSASKEWAASKGQPNAWQKYWGGDTKSYYFIGKDNIPFHTIIWPAMLMGKGGLNLPYDVPSNEYLTTESQKFSKSRNNAIWVDDVLSRYGVDTLRYLLSANMPESSDTDFSWREFVRRNNDELVATYGNLAQRVLTMVCRNYDNKVPEYGELDERSLTLIEKTAAMLCETDKALYNCNFREAIRLAMALAQEANRYLDEKAPWKEIKVDKAAAARSLYVAMVALSGLRVAFYPFLPESSGRLSTYLGFGSELEKESWILKMPVVGQELTPPEPLFKKLEDSVVEEETARMGL</sequence>
<reference key="1">
    <citation type="journal article" date="2005" name="Nat. Biotechnol.">
        <title>Genome sequence of the chlorinated compound-respiring bacterium Dehalococcoides species strain CBDB1.</title>
        <authorList>
            <person name="Kube M."/>
            <person name="Beck A."/>
            <person name="Zinder S.H."/>
            <person name="Kuhl H."/>
            <person name="Reinhardt R."/>
            <person name="Adrian L."/>
        </authorList>
    </citation>
    <scope>NUCLEOTIDE SEQUENCE [LARGE SCALE GENOMIC DNA]</scope>
    <source>
        <strain>CBDB1</strain>
    </source>
</reference>
<name>SYM_DEHMC</name>